<geneLocation type="chloroplast"/>
<protein>
    <recommendedName>
        <fullName evidence="2">Large ribosomal subunit protein uL2c</fullName>
    </recommendedName>
    <alternativeName>
        <fullName evidence="4">50S ribosomal protein L2, chloroplastic</fullName>
    </alternativeName>
</protein>
<comment type="subunit">
    <text evidence="1">Part of the 50S ribosomal subunit.</text>
</comment>
<comment type="subcellular location">
    <subcellularLocation>
        <location>Plastid</location>
        <location>Chloroplast</location>
    </subcellularLocation>
</comment>
<comment type="similarity">
    <text evidence="4">Belongs to the universal ribosomal protein uL2 family.</text>
</comment>
<dbReference type="EMBL" id="AF166114">
    <property type="protein sequence ID" value="AAF43812.1"/>
    <property type="molecule type" value="Genomic_DNA"/>
</dbReference>
<dbReference type="RefSeq" id="NP_038371.1">
    <property type="nucleotide sequence ID" value="NC_002186.1"/>
</dbReference>
<dbReference type="SMR" id="Q9MUT9"/>
<dbReference type="GeneID" id="800960"/>
<dbReference type="GO" id="GO:0009507">
    <property type="term" value="C:chloroplast"/>
    <property type="evidence" value="ECO:0007669"/>
    <property type="project" value="UniProtKB-SubCell"/>
</dbReference>
<dbReference type="GO" id="GO:0005762">
    <property type="term" value="C:mitochondrial large ribosomal subunit"/>
    <property type="evidence" value="ECO:0007669"/>
    <property type="project" value="TreeGrafter"/>
</dbReference>
<dbReference type="GO" id="GO:0019843">
    <property type="term" value="F:rRNA binding"/>
    <property type="evidence" value="ECO:0007669"/>
    <property type="project" value="UniProtKB-UniRule"/>
</dbReference>
<dbReference type="GO" id="GO:0003735">
    <property type="term" value="F:structural constituent of ribosome"/>
    <property type="evidence" value="ECO:0007669"/>
    <property type="project" value="InterPro"/>
</dbReference>
<dbReference type="GO" id="GO:0016740">
    <property type="term" value="F:transferase activity"/>
    <property type="evidence" value="ECO:0007669"/>
    <property type="project" value="InterPro"/>
</dbReference>
<dbReference type="GO" id="GO:0032543">
    <property type="term" value="P:mitochondrial translation"/>
    <property type="evidence" value="ECO:0007669"/>
    <property type="project" value="TreeGrafter"/>
</dbReference>
<dbReference type="FunFam" id="2.30.30.30:FF:000001">
    <property type="entry name" value="50S ribosomal protein L2"/>
    <property type="match status" value="1"/>
</dbReference>
<dbReference type="FunFam" id="2.40.50.140:FF:000003">
    <property type="entry name" value="50S ribosomal protein L2"/>
    <property type="match status" value="1"/>
</dbReference>
<dbReference type="FunFam" id="4.10.950.10:FF:000001">
    <property type="entry name" value="50S ribosomal protein L2"/>
    <property type="match status" value="1"/>
</dbReference>
<dbReference type="Gene3D" id="2.30.30.30">
    <property type="match status" value="1"/>
</dbReference>
<dbReference type="Gene3D" id="2.40.50.140">
    <property type="entry name" value="Nucleic acid-binding proteins"/>
    <property type="match status" value="1"/>
</dbReference>
<dbReference type="Gene3D" id="4.10.950.10">
    <property type="entry name" value="Ribosomal protein L2, domain 3"/>
    <property type="match status" value="1"/>
</dbReference>
<dbReference type="HAMAP" id="MF_01320_B">
    <property type="entry name" value="Ribosomal_uL2_B"/>
    <property type="match status" value="1"/>
</dbReference>
<dbReference type="InterPro" id="IPR012340">
    <property type="entry name" value="NA-bd_OB-fold"/>
</dbReference>
<dbReference type="InterPro" id="IPR014722">
    <property type="entry name" value="Rib_uL2_dom2"/>
</dbReference>
<dbReference type="InterPro" id="IPR002171">
    <property type="entry name" value="Ribosomal_uL2"/>
</dbReference>
<dbReference type="InterPro" id="IPR005880">
    <property type="entry name" value="Ribosomal_uL2_bac/org-type"/>
</dbReference>
<dbReference type="InterPro" id="IPR022669">
    <property type="entry name" value="Ribosomal_uL2_C"/>
</dbReference>
<dbReference type="InterPro" id="IPR022671">
    <property type="entry name" value="Ribosomal_uL2_CS"/>
</dbReference>
<dbReference type="InterPro" id="IPR014726">
    <property type="entry name" value="Ribosomal_uL2_dom3"/>
</dbReference>
<dbReference type="InterPro" id="IPR022666">
    <property type="entry name" value="Ribosomal_uL2_RNA-bd_dom"/>
</dbReference>
<dbReference type="InterPro" id="IPR008991">
    <property type="entry name" value="Translation_prot_SH3-like_sf"/>
</dbReference>
<dbReference type="NCBIfam" id="TIGR01171">
    <property type="entry name" value="rplB_bact"/>
    <property type="match status" value="1"/>
</dbReference>
<dbReference type="PANTHER" id="PTHR13691:SF5">
    <property type="entry name" value="LARGE RIBOSOMAL SUBUNIT PROTEIN UL2M"/>
    <property type="match status" value="1"/>
</dbReference>
<dbReference type="PANTHER" id="PTHR13691">
    <property type="entry name" value="RIBOSOMAL PROTEIN L2"/>
    <property type="match status" value="1"/>
</dbReference>
<dbReference type="Pfam" id="PF00181">
    <property type="entry name" value="Ribosomal_L2"/>
    <property type="match status" value="1"/>
</dbReference>
<dbReference type="Pfam" id="PF03947">
    <property type="entry name" value="Ribosomal_L2_C"/>
    <property type="match status" value="1"/>
</dbReference>
<dbReference type="PIRSF" id="PIRSF002158">
    <property type="entry name" value="Ribosomal_L2"/>
    <property type="match status" value="1"/>
</dbReference>
<dbReference type="SMART" id="SM01383">
    <property type="entry name" value="Ribosomal_L2"/>
    <property type="match status" value="1"/>
</dbReference>
<dbReference type="SMART" id="SM01382">
    <property type="entry name" value="Ribosomal_L2_C"/>
    <property type="match status" value="1"/>
</dbReference>
<dbReference type="SUPFAM" id="SSF50249">
    <property type="entry name" value="Nucleic acid-binding proteins"/>
    <property type="match status" value="1"/>
</dbReference>
<dbReference type="SUPFAM" id="SSF50104">
    <property type="entry name" value="Translation proteins SH3-like domain"/>
    <property type="match status" value="1"/>
</dbReference>
<dbReference type="PROSITE" id="PS00467">
    <property type="entry name" value="RIBOSOMAL_L2"/>
    <property type="match status" value="1"/>
</dbReference>
<proteinExistence type="inferred from homology"/>
<sequence>MGIRLYKAYTPGTRNRSVLEFNDITKTNPEKSLTYHRHRSKGRNNRGIITIRHRGGGHKRLCRLIDFTREKNIPATVASIEYDPNRNCRIALLYYKNGIKRYIIHPRGLSVGKEIVSSVEAPLSVGNSLPLNKIPLGTGIHNIELSPGQGGQLARAAGAVAQLIAKEGKFVTVRLPSGEVRLILKECWATIGQVGNVDANNITIGKAGRTRWLGKRPVVRGVVMNPVDHPHGGGEGRSPIGRPKPVSPWGKTALGAKTRKRKKYSDVLIIRRRKSA</sequence>
<name>RK2_MESVI</name>
<feature type="chain" id="PRO_0000129683" description="Large ribosomal subunit protein uL2c">
    <location>
        <begin position="1"/>
        <end position="276"/>
    </location>
</feature>
<feature type="region of interest" description="Disordered" evidence="3">
    <location>
        <begin position="225"/>
        <end position="256"/>
    </location>
</feature>
<accession>Q9MUT9</accession>
<organism>
    <name type="scientific">Mesostigma viride</name>
    <name type="common">Green alga</name>
    <dbReference type="NCBI Taxonomy" id="41882"/>
    <lineage>
        <taxon>Eukaryota</taxon>
        <taxon>Viridiplantae</taxon>
        <taxon>Streptophyta</taxon>
        <taxon>Mesostigmatophyceae</taxon>
        <taxon>Mesostigmatales</taxon>
        <taxon>Mesostigmataceae</taxon>
        <taxon>Mesostigma</taxon>
    </lineage>
</organism>
<keyword id="KW-0150">Chloroplast</keyword>
<keyword id="KW-0934">Plastid</keyword>
<keyword id="KW-0687">Ribonucleoprotein</keyword>
<keyword id="KW-0689">Ribosomal protein</keyword>
<evidence type="ECO:0000250" key="1"/>
<evidence type="ECO:0000255" key="2">
    <source>
        <dbReference type="HAMAP-Rule" id="MF_01320"/>
    </source>
</evidence>
<evidence type="ECO:0000256" key="3">
    <source>
        <dbReference type="SAM" id="MobiDB-lite"/>
    </source>
</evidence>
<evidence type="ECO:0000305" key="4"/>
<gene>
    <name type="primary">rpl2</name>
</gene>
<reference key="1">
    <citation type="journal article" date="2000" name="Nature">
        <title>Ancestral chloroplast genome in Mesostigma viride reveals an early branch of green plant evolution.</title>
        <authorList>
            <person name="Lemieux C."/>
            <person name="Otis C."/>
            <person name="Turmel M."/>
        </authorList>
    </citation>
    <scope>NUCLEOTIDE SEQUENCE [LARGE SCALE GENOMIC DNA]</scope>
    <source>
        <strain>NIES-296 / KY-14 / CCMP 2046</strain>
    </source>
</reference>